<accession>B7LN84</accession>
<name>MUKF_ESCF3</name>
<evidence type="ECO:0000255" key="1">
    <source>
        <dbReference type="HAMAP-Rule" id="MF_01803"/>
    </source>
</evidence>
<protein>
    <recommendedName>
        <fullName evidence="1">Chromosome partition protein MukF</fullName>
    </recommendedName>
</protein>
<dbReference type="EMBL" id="CU928158">
    <property type="protein sequence ID" value="CAQ88595.1"/>
    <property type="molecule type" value="Genomic_DNA"/>
</dbReference>
<dbReference type="RefSeq" id="WP_001288847.1">
    <property type="nucleotide sequence ID" value="NC_011740.1"/>
</dbReference>
<dbReference type="SMR" id="B7LN84"/>
<dbReference type="GeneID" id="75057883"/>
<dbReference type="KEGG" id="efe:EFER_1066"/>
<dbReference type="HOGENOM" id="CLU_049853_0_0_6"/>
<dbReference type="OrthoDB" id="6450805at2"/>
<dbReference type="Proteomes" id="UP000000745">
    <property type="component" value="Chromosome"/>
</dbReference>
<dbReference type="GO" id="GO:0005737">
    <property type="term" value="C:cytoplasm"/>
    <property type="evidence" value="ECO:0007669"/>
    <property type="project" value="UniProtKB-UniRule"/>
</dbReference>
<dbReference type="GO" id="GO:0009295">
    <property type="term" value="C:nucleoid"/>
    <property type="evidence" value="ECO:0007669"/>
    <property type="project" value="UniProtKB-SubCell"/>
</dbReference>
<dbReference type="GO" id="GO:0005509">
    <property type="term" value="F:calcium ion binding"/>
    <property type="evidence" value="ECO:0007669"/>
    <property type="project" value="UniProtKB-UniRule"/>
</dbReference>
<dbReference type="GO" id="GO:0051301">
    <property type="term" value="P:cell division"/>
    <property type="evidence" value="ECO:0007669"/>
    <property type="project" value="UniProtKB-KW"/>
</dbReference>
<dbReference type="GO" id="GO:0030261">
    <property type="term" value="P:chromosome condensation"/>
    <property type="evidence" value="ECO:0007669"/>
    <property type="project" value="UniProtKB-KW"/>
</dbReference>
<dbReference type="GO" id="GO:0007059">
    <property type="term" value="P:chromosome segregation"/>
    <property type="evidence" value="ECO:0007669"/>
    <property type="project" value="UniProtKB-UniRule"/>
</dbReference>
<dbReference type="GO" id="GO:0006260">
    <property type="term" value="P:DNA replication"/>
    <property type="evidence" value="ECO:0007669"/>
    <property type="project" value="UniProtKB-UniRule"/>
</dbReference>
<dbReference type="CDD" id="cd16337">
    <property type="entry name" value="MukF_C"/>
    <property type="match status" value="1"/>
</dbReference>
<dbReference type="CDD" id="cd16335">
    <property type="entry name" value="MukF_N"/>
    <property type="match status" value="1"/>
</dbReference>
<dbReference type="Gene3D" id="1.20.58.590">
    <property type="entry name" value="Chromosome partition protein MukF, middle domain"/>
    <property type="match status" value="1"/>
</dbReference>
<dbReference type="Gene3D" id="1.10.225.40">
    <property type="entry name" value="MukF, C-terminal domain"/>
    <property type="match status" value="1"/>
</dbReference>
<dbReference type="Gene3D" id="1.10.10.10">
    <property type="entry name" value="Winged helix-like DNA-binding domain superfamily/Winged helix DNA-binding domain"/>
    <property type="match status" value="1"/>
</dbReference>
<dbReference type="HAMAP" id="MF_01803">
    <property type="entry name" value="MukF"/>
    <property type="match status" value="1"/>
</dbReference>
<dbReference type="InterPro" id="IPR005582">
    <property type="entry name" value="Chromosome_partition_MukF"/>
</dbReference>
<dbReference type="InterPro" id="IPR033441">
    <property type="entry name" value="MukF_C"/>
</dbReference>
<dbReference type="InterPro" id="IPR038198">
    <property type="entry name" value="MukF_C_sf"/>
</dbReference>
<dbReference type="InterPro" id="IPR033440">
    <property type="entry name" value="MukF_M"/>
</dbReference>
<dbReference type="InterPro" id="IPR036141">
    <property type="entry name" value="MukF_M_sp"/>
</dbReference>
<dbReference type="InterPro" id="IPR033439">
    <property type="entry name" value="MukF_WHTH"/>
</dbReference>
<dbReference type="InterPro" id="IPR036388">
    <property type="entry name" value="WH-like_DNA-bd_sf"/>
</dbReference>
<dbReference type="InterPro" id="IPR036390">
    <property type="entry name" value="WH_DNA-bd_sf"/>
</dbReference>
<dbReference type="NCBIfam" id="NF003615">
    <property type="entry name" value="PRK05260.1"/>
    <property type="match status" value="1"/>
</dbReference>
<dbReference type="Pfam" id="PF03882">
    <property type="entry name" value="KicB"/>
    <property type="match status" value="1"/>
</dbReference>
<dbReference type="Pfam" id="PF17193">
    <property type="entry name" value="MukF_C"/>
    <property type="match status" value="1"/>
</dbReference>
<dbReference type="Pfam" id="PF17192">
    <property type="entry name" value="MukF_M"/>
    <property type="match status" value="1"/>
</dbReference>
<dbReference type="PIRSF" id="PIRSF018282">
    <property type="entry name" value="MukF"/>
    <property type="match status" value="1"/>
</dbReference>
<dbReference type="SUPFAM" id="SSF140570">
    <property type="entry name" value="MukF C-terminal domain-like"/>
    <property type="match status" value="1"/>
</dbReference>
<dbReference type="SUPFAM" id="SSF46785">
    <property type="entry name" value="Winged helix' DNA-binding domain"/>
    <property type="match status" value="1"/>
</dbReference>
<keyword id="KW-0106">Calcium</keyword>
<keyword id="KW-0131">Cell cycle</keyword>
<keyword id="KW-0132">Cell division</keyword>
<keyword id="KW-0159">Chromosome partition</keyword>
<keyword id="KW-0963">Cytoplasm</keyword>
<keyword id="KW-0226">DNA condensation</keyword>
<gene>
    <name evidence="1" type="primary">mukF</name>
    <name type="ordered locus">EFER_1066</name>
</gene>
<organism>
    <name type="scientific">Escherichia fergusonii (strain ATCC 35469 / DSM 13698 / CCUG 18766 / IAM 14443 / JCM 21226 / LMG 7866 / NBRC 102419 / NCTC 12128 / CDC 0568-73)</name>
    <dbReference type="NCBI Taxonomy" id="585054"/>
    <lineage>
        <taxon>Bacteria</taxon>
        <taxon>Pseudomonadati</taxon>
        <taxon>Pseudomonadota</taxon>
        <taxon>Gammaproteobacteria</taxon>
        <taxon>Enterobacterales</taxon>
        <taxon>Enterobacteriaceae</taxon>
        <taxon>Escherichia</taxon>
    </lineage>
</organism>
<comment type="function">
    <text evidence="1">Involved in chromosome condensation, segregation and cell cycle progression. May participate in facilitating chromosome segregation by condensation DNA from both sides of a centrally located replisome during cell division. Not required for mini-F plasmid partitioning. Probably acts via its interaction with MukB and MukE. Overexpression results in anucleate cells. It has a calcium binding activity.</text>
</comment>
<comment type="subunit">
    <text evidence="1">Interacts, and probably forms a ternary complex, with MukE and MukB via its C-terminal region. The complex formation is stimulated by calcium or magnesium. It is required for an interaction between MukE and MukB.</text>
</comment>
<comment type="subcellular location">
    <subcellularLocation>
        <location evidence="1">Cytoplasm</location>
        <location evidence="1">Nucleoid</location>
    </subcellularLocation>
    <text evidence="1">Restricted to the nucleoid region.</text>
</comment>
<comment type="similarity">
    <text evidence="1">Belongs to the MukF family.</text>
</comment>
<reference key="1">
    <citation type="journal article" date="2009" name="PLoS Genet.">
        <title>Organised genome dynamics in the Escherichia coli species results in highly diverse adaptive paths.</title>
        <authorList>
            <person name="Touchon M."/>
            <person name="Hoede C."/>
            <person name="Tenaillon O."/>
            <person name="Barbe V."/>
            <person name="Baeriswyl S."/>
            <person name="Bidet P."/>
            <person name="Bingen E."/>
            <person name="Bonacorsi S."/>
            <person name="Bouchier C."/>
            <person name="Bouvet O."/>
            <person name="Calteau A."/>
            <person name="Chiapello H."/>
            <person name="Clermont O."/>
            <person name="Cruveiller S."/>
            <person name="Danchin A."/>
            <person name="Diard M."/>
            <person name="Dossat C."/>
            <person name="Karoui M.E."/>
            <person name="Frapy E."/>
            <person name="Garry L."/>
            <person name="Ghigo J.M."/>
            <person name="Gilles A.M."/>
            <person name="Johnson J."/>
            <person name="Le Bouguenec C."/>
            <person name="Lescat M."/>
            <person name="Mangenot S."/>
            <person name="Martinez-Jehanne V."/>
            <person name="Matic I."/>
            <person name="Nassif X."/>
            <person name="Oztas S."/>
            <person name="Petit M.A."/>
            <person name="Pichon C."/>
            <person name="Rouy Z."/>
            <person name="Ruf C.S."/>
            <person name="Schneider D."/>
            <person name="Tourret J."/>
            <person name="Vacherie B."/>
            <person name="Vallenet D."/>
            <person name="Medigue C."/>
            <person name="Rocha E.P.C."/>
            <person name="Denamur E."/>
        </authorList>
    </citation>
    <scope>NUCLEOTIDE SEQUENCE [LARGE SCALE GENOMIC DNA]</scope>
    <source>
        <strain>ATCC 35469 / DSM 13698 / BCRC 15582 / CCUG 18766 / IAM 14443 / JCM 21226 / LMG 7866 / NBRC 102419 / NCTC 12128 / CDC 0568-73</strain>
    </source>
</reference>
<feature type="chain" id="PRO_1000187509" description="Chromosome partition protein MukF">
    <location>
        <begin position="1"/>
        <end position="440"/>
    </location>
</feature>
<feature type="region of interest" description="Leucine-zipper">
    <location>
        <begin position="208"/>
        <end position="236"/>
    </location>
</feature>
<sequence length="440" mass="50563">MSEFSQTVPELVAWARKNDFSISLPVDRLSFLLAVATLNGERLDGEMSEGELVDAFRHVSDAFEQTSETIGVRANNAINDMVRQRLLNRFTSEQAEGNAIYRLTPLGIGITDYYIRQREFSTLRLSMQLSIVAGELKRAADAAEEGGDEFHWHRNVYAPLKYSVAEIFDSIDLTQRLMDEQQQQVKDDIAQLLNKDWRAAISSCELLLSETSGTLRELQDTLEAAGDKLQANLLRIQDATMTHDDLHFVDRLVFDLQSKLDRIISWGQQSIDLWIGYDRHVHKFIRTAIDMDKNRVFAQRLRQSVQTYFDEPWALTYANADRLLDMRDEEMALRDEEVTGELPEDLEYEEFNEIREQLAAIIEEQLAVYKTRQVPLDLGLVVREYLAQYPRARHFDVARIVIDQAVRLGVAQADFTGLPAKWQPINDYGAKVQAHVIDKY</sequence>
<proteinExistence type="inferred from homology"/>